<organism>
    <name type="scientific">Shewanella frigidimarina (strain NCIMB 400)</name>
    <dbReference type="NCBI Taxonomy" id="318167"/>
    <lineage>
        <taxon>Bacteria</taxon>
        <taxon>Pseudomonadati</taxon>
        <taxon>Pseudomonadota</taxon>
        <taxon>Gammaproteobacteria</taxon>
        <taxon>Alteromonadales</taxon>
        <taxon>Shewanellaceae</taxon>
        <taxon>Shewanella</taxon>
    </lineage>
</organism>
<sequence length="195" mass="20840">MAWVLASTSPRRKELLAQAGFSHLDFSFQLVAPNIDETPLSTETAEQYVCRLALEKAQAGLALSSHVVKPQVLGSDTIVVLNGLILGKPIDQNDAKRMLALLSGQTHEVMTAVALTDGEHTFNRLCRTQVSFCELSAADIDAYVGSGEPMDKAGAYGIQALGGCFVKSITGSYSAVVGLPLVETRELLACMMQHT</sequence>
<dbReference type="EC" id="3.6.1.9" evidence="1"/>
<dbReference type="EMBL" id="CP000447">
    <property type="protein sequence ID" value="ABI73562.1"/>
    <property type="molecule type" value="Genomic_DNA"/>
</dbReference>
<dbReference type="RefSeq" id="WP_011639150.1">
    <property type="nucleotide sequence ID" value="NC_008345.1"/>
</dbReference>
<dbReference type="SMR" id="Q07WQ2"/>
<dbReference type="STRING" id="318167.Sfri_3735"/>
<dbReference type="KEGG" id="sfr:Sfri_3735"/>
<dbReference type="eggNOG" id="COG0424">
    <property type="taxonomic scope" value="Bacteria"/>
</dbReference>
<dbReference type="HOGENOM" id="CLU_040416_2_1_6"/>
<dbReference type="OrthoDB" id="9807767at2"/>
<dbReference type="Proteomes" id="UP000000684">
    <property type="component" value="Chromosome"/>
</dbReference>
<dbReference type="GO" id="GO:0005737">
    <property type="term" value="C:cytoplasm"/>
    <property type="evidence" value="ECO:0007669"/>
    <property type="project" value="UniProtKB-SubCell"/>
</dbReference>
<dbReference type="GO" id="GO:0036218">
    <property type="term" value="F:dTTP diphosphatase activity"/>
    <property type="evidence" value="ECO:0007669"/>
    <property type="project" value="RHEA"/>
</dbReference>
<dbReference type="GO" id="GO:0036221">
    <property type="term" value="F:UTP diphosphatase activity"/>
    <property type="evidence" value="ECO:0007669"/>
    <property type="project" value="RHEA"/>
</dbReference>
<dbReference type="GO" id="GO:0009117">
    <property type="term" value="P:nucleotide metabolic process"/>
    <property type="evidence" value="ECO:0007669"/>
    <property type="project" value="UniProtKB-KW"/>
</dbReference>
<dbReference type="CDD" id="cd00555">
    <property type="entry name" value="Maf"/>
    <property type="match status" value="1"/>
</dbReference>
<dbReference type="Gene3D" id="3.90.950.10">
    <property type="match status" value="1"/>
</dbReference>
<dbReference type="HAMAP" id="MF_00528">
    <property type="entry name" value="Maf"/>
    <property type="match status" value="1"/>
</dbReference>
<dbReference type="InterPro" id="IPR029001">
    <property type="entry name" value="ITPase-like_fam"/>
</dbReference>
<dbReference type="InterPro" id="IPR003697">
    <property type="entry name" value="Maf-like"/>
</dbReference>
<dbReference type="NCBIfam" id="TIGR00172">
    <property type="entry name" value="maf"/>
    <property type="match status" value="1"/>
</dbReference>
<dbReference type="PANTHER" id="PTHR43213">
    <property type="entry name" value="BIFUNCTIONAL DTTP/UTP PYROPHOSPHATASE/METHYLTRANSFERASE PROTEIN-RELATED"/>
    <property type="match status" value="1"/>
</dbReference>
<dbReference type="PANTHER" id="PTHR43213:SF5">
    <property type="entry name" value="BIFUNCTIONAL DTTP_UTP PYROPHOSPHATASE_METHYLTRANSFERASE PROTEIN-RELATED"/>
    <property type="match status" value="1"/>
</dbReference>
<dbReference type="Pfam" id="PF02545">
    <property type="entry name" value="Maf"/>
    <property type="match status" value="1"/>
</dbReference>
<dbReference type="PIRSF" id="PIRSF006305">
    <property type="entry name" value="Maf"/>
    <property type="match status" value="1"/>
</dbReference>
<dbReference type="SUPFAM" id="SSF52972">
    <property type="entry name" value="ITPase-like"/>
    <property type="match status" value="1"/>
</dbReference>
<feature type="chain" id="PRO_0000267426" description="dTTP/UTP pyrophosphatase">
    <location>
        <begin position="1"/>
        <end position="195"/>
    </location>
</feature>
<feature type="active site" description="Proton acceptor" evidence="1">
    <location>
        <position position="76"/>
    </location>
</feature>
<feature type="site" description="Important for substrate specificity" evidence="1">
    <location>
        <position position="11"/>
    </location>
</feature>
<feature type="site" description="Important for substrate specificity" evidence="1">
    <location>
        <position position="77"/>
    </location>
</feature>
<feature type="site" description="Important for substrate specificity" evidence="1">
    <location>
        <position position="159"/>
    </location>
</feature>
<gene>
    <name type="ordered locus">Sfri_3735</name>
</gene>
<proteinExistence type="inferred from homology"/>
<protein>
    <recommendedName>
        <fullName evidence="1">dTTP/UTP pyrophosphatase</fullName>
        <shortName evidence="1">dTTPase/UTPase</shortName>
        <ecNumber evidence="1">3.6.1.9</ecNumber>
    </recommendedName>
    <alternativeName>
        <fullName evidence="1">Nucleoside triphosphate pyrophosphatase</fullName>
    </alternativeName>
    <alternativeName>
        <fullName evidence="1">Nucleotide pyrophosphatase</fullName>
        <shortName evidence="1">Nucleotide PPase</shortName>
    </alternativeName>
</protein>
<keyword id="KW-0963">Cytoplasm</keyword>
<keyword id="KW-0378">Hydrolase</keyword>
<keyword id="KW-0546">Nucleotide metabolism</keyword>
<keyword id="KW-1185">Reference proteome</keyword>
<comment type="function">
    <text evidence="1">Nucleoside triphosphate pyrophosphatase that hydrolyzes dTTP and UTP. May have a dual role in cell division arrest and in preventing the incorporation of modified nucleotides into cellular nucleic acids.</text>
</comment>
<comment type="catalytic activity">
    <reaction evidence="1">
        <text>dTTP + H2O = dTMP + diphosphate + H(+)</text>
        <dbReference type="Rhea" id="RHEA:28534"/>
        <dbReference type="ChEBI" id="CHEBI:15377"/>
        <dbReference type="ChEBI" id="CHEBI:15378"/>
        <dbReference type="ChEBI" id="CHEBI:33019"/>
        <dbReference type="ChEBI" id="CHEBI:37568"/>
        <dbReference type="ChEBI" id="CHEBI:63528"/>
        <dbReference type="EC" id="3.6.1.9"/>
    </reaction>
</comment>
<comment type="catalytic activity">
    <reaction evidence="1">
        <text>UTP + H2O = UMP + diphosphate + H(+)</text>
        <dbReference type="Rhea" id="RHEA:29395"/>
        <dbReference type="ChEBI" id="CHEBI:15377"/>
        <dbReference type="ChEBI" id="CHEBI:15378"/>
        <dbReference type="ChEBI" id="CHEBI:33019"/>
        <dbReference type="ChEBI" id="CHEBI:46398"/>
        <dbReference type="ChEBI" id="CHEBI:57865"/>
        <dbReference type="EC" id="3.6.1.9"/>
    </reaction>
</comment>
<comment type="cofactor">
    <cofactor evidence="1">
        <name>a divalent metal cation</name>
        <dbReference type="ChEBI" id="CHEBI:60240"/>
    </cofactor>
</comment>
<comment type="subcellular location">
    <subcellularLocation>
        <location evidence="1">Cytoplasm</location>
    </subcellularLocation>
</comment>
<comment type="similarity">
    <text evidence="1">Belongs to the Maf family. YhdE subfamily.</text>
</comment>
<accession>Q07WQ2</accession>
<name>NTPPA_SHEFN</name>
<evidence type="ECO:0000255" key="1">
    <source>
        <dbReference type="HAMAP-Rule" id="MF_00528"/>
    </source>
</evidence>
<reference key="1">
    <citation type="submission" date="2006-08" db="EMBL/GenBank/DDBJ databases">
        <title>Complete sequence of Shewanella frigidimarina NCIMB 400.</title>
        <authorList>
            <consortium name="US DOE Joint Genome Institute"/>
            <person name="Copeland A."/>
            <person name="Lucas S."/>
            <person name="Lapidus A."/>
            <person name="Barry K."/>
            <person name="Detter J.C."/>
            <person name="Glavina del Rio T."/>
            <person name="Hammon N."/>
            <person name="Israni S."/>
            <person name="Dalin E."/>
            <person name="Tice H."/>
            <person name="Pitluck S."/>
            <person name="Fredrickson J.K."/>
            <person name="Kolker E."/>
            <person name="McCuel L.A."/>
            <person name="DiChristina T."/>
            <person name="Nealson K.H."/>
            <person name="Newman D."/>
            <person name="Tiedje J.M."/>
            <person name="Zhou J."/>
            <person name="Romine M.F."/>
            <person name="Culley D.E."/>
            <person name="Serres M."/>
            <person name="Chertkov O."/>
            <person name="Brettin T."/>
            <person name="Bruce D."/>
            <person name="Han C."/>
            <person name="Tapia R."/>
            <person name="Gilna P."/>
            <person name="Schmutz J."/>
            <person name="Larimer F."/>
            <person name="Land M."/>
            <person name="Hauser L."/>
            <person name="Kyrpides N."/>
            <person name="Mikhailova N."/>
            <person name="Richardson P."/>
        </authorList>
    </citation>
    <scope>NUCLEOTIDE SEQUENCE [LARGE SCALE GENOMIC DNA]</scope>
    <source>
        <strain>NCIMB 400</strain>
    </source>
</reference>